<name>PC11X_PANTR</name>
<sequence>MDLLSGTYIFAVLLACVVFHSGAQEKNYTIREEMPENVLIGDLLKDLNLSLIPNKSLTTAMQFKLVYKTGDVPLIRIEEDTGEIFTTGARIDREKLCAGIPRDEHCFYEVEVAILPDEIFRLVKIRFLIEDINDNAPLFPATVINISIPENSAINSKYTLPAAVDPDVGTNGVQNYELIKSQNIFGLDVIETPEGDKMPQLIVQKELDREEKDTYVMKVKVEDGGFPQRSSTAILQVSVTDTNDNHPVFKETEIEVSIPENAPVGTSVTQLHATDADIGENAKIHFSFSNLVSNIARRLFHLNATTGLITIKEPLDREETPNHKLLVLASDGGLMPARAMVLVNVTDVNDNVPSIDIRYIVNPVNDTVVLSENIPLNTKIALITVTDKDADHNGRVTCFTDHEIPFRLRPVFSNQFLLETAAYLDYESTKEYAIKLLAADAGKPPLNQSAMLFIKVKDENDNAPVFTQSFVTVSIPENNSPGIQLTKVSATDADSGPNAEINYLLGPDAPPEFSLDRRTGMLTVVKKLDREKEDKYLFTILAKDNGVPPLTSNVTVFVSIIDQNDNSPVFTHNEYNFYVPENLPRHGTVGLITVTDPDYGDNSAVTLSILDENDDFTIDSQTGVIRPNISFDREKQESYTFYVKAEDGGRVSRSSSAKVTINVVDVNDNKPVFIVPPSNYSYELVLPSTNPGTVVFQVMAVDNDTGMNAEVRYSIVGGNTRDLFAIDQETGNITLMEKCDVTDLGLHRVLVKANDLGQPDSLFSVVIVNLFVNESVTNATLINELVRKSTEAPVTPNTEIADVSSPTSDYVKILVAAVAGTITVVVVIFITAVVRCRQAPHLKAAQKNKQNSEWATPNPENRQMIMMKKRKKKKKHSPKNLLLNFVTIEETKADDVDSDGNRVTLDLPIDLEEQTMGKYNWVTTPTTFKPDSPDLARHYKSASPQPAFQIQPETPLNSKHHIIQELPLDNTFVACDSISKCSSSSSDPYSVSDCGYPVTTFEVPVSVHTRPPMKEVVRSCTPMKESTTMEIWIHPQPQRKSEGKVAGKSQRRVTFHLPEGSQESSSDGGLGDHDAGSLTSTSHGLPLGYPQEEYFDRATPSNRTEGDGNSDPESTFIPGLKKAAEITVQPTVEEASDNCTQECLIYGHSDACWMPASLDHSSSSQAQASALCHSPPLSQASTQHHSPPVTQTIALCHSPPVTQTIALCHSPPPIQVSALHHSPPLVQATALHHSPPSAQASALCYSPPLAQAAAISHSSPLPQVIALHRSQAQSSVSLQQGWVQGADGLCSVDQGVQGSATSQFYTMSERLHPSDDSIKVIPLTTFTPRQQARPSRGDSPVMEEHPL</sequence>
<evidence type="ECO:0000250" key="1"/>
<evidence type="ECO:0000255" key="2"/>
<evidence type="ECO:0000255" key="3">
    <source>
        <dbReference type="PROSITE-ProRule" id="PRU00043"/>
    </source>
</evidence>
<evidence type="ECO:0000256" key="4">
    <source>
        <dbReference type="SAM" id="MobiDB-lite"/>
    </source>
</evidence>
<evidence type="ECO:0000305" key="5"/>
<proteinExistence type="inferred from homology"/>
<dbReference type="EMBL" id="AF461067">
    <property type="protein sequence ID" value="AAQ04772.1"/>
    <property type="molecule type" value="Genomic_DNA"/>
</dbReference>
<dbReference type="EMBL" id="AF461065">
    <property type="protein sequence ID" value="AAQ04772.1"/>
    <property type="status" value="JOINED"/>
    <property type="molecule type" value="Genomic_DNA"/>
</dbReference>
<dbReference type="EMBL" id="AF461066">
    <property type="protein sequence ID" value="AAQ04772.1"/>
    <property type="status" value="JOINED"/>
    <property type="molecule type" value="Genomic_DNA"/>
</dbReference>
<dbReference type="EMBL" id="AF461072">
    <property type="protein sequence ID" value="AAQ04773.1"/>
    <property type="molecule type" value="Genomic_DNA"/>
</dbReference>
<dbReference type="EMBL" id="AF461065">
    <property type="protein sequence ID" value="AAQ04773.1"/>
    <property type="status" value="JOINED"/>
    <property type="molecule type" value="Genomic_DNA"/>
</dbReference>
<dbReference type="EMBL" id="AF461066">
    <property type="protein sequence ID" value="AAQ04773.1"/>
    <property type="status" value="JOINED"/>
    <property type="molecule type" value="Genomic_DNA"/>
</dbReference>
<dbReference type="EMBL" id="AF461069">
    <property type="protein sequence ID" value="AAQ04773.1"/>
    <property type="status" value="JOINED"/>
    <property type="molecule type" value="Genomic_DNA"/>
</dbReference>
<dbReference type="EMBL" id="AF461071">
    <property type="protein sequence ID" value="AAQ04773.1"/>
    <property type="status" value="JOINED"/>
    <property type="molecule type" value="Genomic_DNA"/>
</dbReference>
<dbReference type="EMBL" id="AF461070">
    <property type="protein sequence ID" value="AAQ04773.1"/>
    <property type="status" value="JOINED"/>
    <property type="molecule type" value="Genomic_DNA"/>
</dbReference>
<dbReference type="EMBL" id="AF461068">
    <property type="protein sequence ID" value="AAQ04773.1"/>
    <property type="status" value="JOINED"/>
    <property type="molecule type" value="Genomic_DNA"/>
</dbReference>
<dbReference type="RefSeq" id="XP_009437584.2">
    <property type="nucleotide sequence ID" value="XM_009439309.2"/>
</dbReference>
<dbReference type="RefSeq" id="XP_009437585.2">
    <molecule id="Q71M42-1"/>
    <property type="nucleotide sequence ID" value="XM_009439310.5"/>
</dbReference>
<dbReference type="RefSeq" id="XP_016799002.1">
    <property type="nucleotide sequence ID" value="XM_016943513.1"/>
</dbReference>
<dbReference type="SMR" id="Q71M42"/>
<dbReference type="FunCoup" id="Q71M42">
    <property type="interactions" value="4"/>
</dbReference>
<dbReference type="STRING" id="9598.ENSPTRP00000037987"/>
<dbReference type="GlyCosmos" id="Q71M42">
    <property type="glycosylation" value="6 sites, No reported glycans"/>
</dbReference>
<dbReference type="PaxDb" id="9598-ENSPTRP00000037987"/>
<dbReference type="Ensembl" id="ENSPTRT00000041121.4">
    <molecule id="Q71M42-1"/>
    <property type="protein sequence ID" value="ENSPTRP00000037987.4"/>
    <property type="gene ID" value="ENSPTRG00000022079.7"/>
</dbReference>
<dbReference type="Ensembl" id="ENSPTRT00000087507.1">
    <molecule id="Q71M42-2"/>
    <property type="protein sequence ID" value="ENSPTRP00000081323.1"/>
    <property type="gene ID" value="ENSPTRG00000050456.1"/>
</dbReference>
<dbReference type="GeneID" id="104001127"/>
<dbReference type="KEGG" id="ptr:104001127"/>
<dbReference type="CTD" id="27328"/>
<dbReference type="eggNOG" id="ENOG502QPMK">
    <property type="taxonomic scope" value="Eukaryota"/>
</dbReference>
<dbReference type="GeneTree" id="ENSGT00940000158335"/>
<dbReference type="InParanoid" id="Q71M42"/>
<dbReference type="OMA" id="ENQFLME"/>
<dbReference type="Proteomes" id="UP000002277">
    <property type="component" value="Chromosome X"/>
</dbReference>
<dbReference type="Bgee" id="ENSPTRG00000022079">
    <property type="expression patterns" value="Expressed in temporal lobe and 6 other cell types or tissues"/>
</dbReference>
<dbReference type="GO" id="GO:0005886">
    <property type="term" value="C:plasma membrane"/>
    <property type="evidence" value="ECO:0000318"/>
    <property type="project" value="GO_Central"/>
</dbReference>
<dbReference type="GO" id="GO:0005509">
    <property type="term" value="F:calcium ion binding"/>
    <property type="evidence" value="ECO:0007669"/>
    <property type="project" value="InterPro"/>
</dbReference>
<dbReference type="GO" id="GO:0007155">
    <property type="term" value="P:cell adhesion"/>
    <property type="evidence" value="ECO:0000318"/>
    <property type="project" value="GO_Central"/>
</dbReference>
<dbReference type="GO" id="GO:0007156">
    <property type="term" value="P:homophilic cell adhesion via plasma membrane adhesion molecules"/>
    <property type="evidence" value="ECO:0007669"/>
    <property type="project" value="InterPro"/>
</dbReference>
<dbReference type="CDD" id="cd11304">
    <property type="entry name" value="Cadherin_repeat"/>
    <property type="match status" value="5"/>
</dbReference>
<dbReference type="FunFam" id="2.60.40.60:FF:000005">
    <property type="entry name" value="Protocadherin 9"/>
    <property type="match status" value="2"/>
</dbReference>
<dbReference type="FunFam" id="2.60.40.60:FF:000016">
    <property type="entry name" value="Protocadherin 9"/>
    <property type="match status" value="1"/>
</dbReference>
<dbReference type="FunFam" id="2.60.40.60:FF:000030">
    <property type="entry name" value="Protocadherin 9"/>
    <property type="match status" value="1"/>
</dbReference>
<dbReference type="FunFam" id="2.60.40.60:FF:000036">
    <property type="entry name" value="Protocadherin 9"/>
    <property type="match status" value="1"/>
</dbReference>
<dbReference type="FunFam" id="2.60.40.60:FF:000069">
    <property type="entry name" value="Protocadherin-11 X-linked"/>
    <property type="match status" value="1"/>
</dbReference>
<dbReference type="FunFam" id="2.60.40.60:FF:000077">
    <property type="entry name" value="Protocadherin-11 X-linked"/>
    <property type="match status" value="1"/>
</dbReference>
<dbReference type="Gene3D" id="2.60.40.60">
    <property type="entry name" value="Cadherins"/>
    <property type="match status" value="7"/>
</dbReference>
<dbReference type="InterPro" id="IPR002126">
    <property type="entry name" value="Cadherin-like_dom"/>
</dbReference>
<dbReference type="InterPro" id="IPR015919">
    <property type="entry name" value="Cadherin-like_sf"/>
</dbReference>
<dbReference type="InterPro" id="IPR020894">
    <property type="entry name" value="Cadherin_CS"/>
</dbReference>
<dbReference type="InterPro" id="IPR013164">
    <property type="entry name" value="Cadherin_N"/>
</dbReference>
<dbReference type="InterPro" id="IPR013585">
    <property type="entry name" value="Protocadherin"/>
</dbReference>
<dbReference type="InterPro" id="IPR050174">
    <property type="entry name" value="Protocadherin/Cadherin-CA"/>
</dbReference>
<dbReference type="PANTHER" id="PTHR24028">
    <property type="entry name" value="CADHERIN-87A"/>
    <property type="match status" value="1"/>
</dbReference>
<dbReference type="PANTHER" id="PTHR24028:SF254">
    <property type="entry name" value="PROTOCADHERIN-11 X-LINKED-RELATED"/>
    <property type="match status" value="1"/>
</dbReference>
<dbReference type="Pfam" id="PF00028">
    <property type="entry name" value="Cadherin"/>
    <property type="match status" value="6"/>
</dbReference>
<dbReference type="Pfam" id="PF08266">
    <property type="entry name" value="Cadherin_2"/>
    <property type="match status" value="1"/>
</dbReference>
<dbReference type="Pfam" id="PF08374">
    <property type="entry name" value="Protocadherin"/>
    <property type="match status" value="1"/>
</dbReference>
<dbReference type="PRINTS" id="PR00205">
    <property type="entry name" value="CADHERIN"/>
</dbReference>
<dbReference type="SMART" id="SM00112">
    <property type="entry name" value="CA"/>
    <property type="match status" value="6"/>
</dbReference>
<dbReference type="SUPFAM" id="SSF49313">
    <property type="entry name" value="Cadherin-like"/>
    <property type="match status" value="6"/>
</dbReference>
<dbReference type="PROSITE" id="PS00232">
    <property type="entry name" value="CADHERIN_1"/>
    <property type="match status" value="5"/>
</dbReference>
<dbReference type="PROSITE" id="PS50268">
    <property type="entry name" value="CADHERIN_2"/>
    <property type="match status" value="7"/>
</dbReference>
<comment type="function">
    <text evidence="1">Potential calcium-dependent cell-adhesion protein.</text>
</comment>
<comment type="subcellular location">
    <subcellularLocation>
        <location evidence="5">Cell membrane</location>
        <topology evidence="5">Single-pass type I membrane protein</topology>
    </subcellularLocation>
</comment>
<comment type="alternative products">
    <event type="alternative splicing"/>
    <isoform>
        <id>Q71M42-1</id>
        <name>1</name>
        <sequence type="displayed"/>
    </isoform>
    <isoform>
        <id>Q71M42-2</id>
        <name>2</name>
        <sequence type="described" ref="VSP_017990 VSP_017991"/>
    </isoform>
</comment>
<feature type="signal peptide" evidence="2">
    <location>
        <begin position="1"/>
        <end position="23"/>
    </location>
</feature>
<feature type="chain" id="PRO_0000232760" description="Protocadherin-11 X-linked">
    <location>
        <begin position="24"/>
        <end position="1347"/>
    </location>
</feature>
<feature type="topological domain" description="Extracellular" evidence="2">
    <location>
        <begin position="24"/>
        <end position="812"/>
    </location>
</feature>
<feature type="transmembrane region" description="Helical" evidence="2">
    <location>
        <begin position="813"/>
        <end position="833"/>
    </location>
</feature>
<feature type="topological domain" description="Cytoplasmic" evidence="2">
    <location>
        <begin position="834"/>
        <end position="1347"/>
    </location>
</feature>
<feature type="domain" description="Cadherin 1" evidence="3">
    <location>
        <begin position="26"/>
        <end position="139"/>
    </location>
</feature>
<feature type="domain" description="Cadherin 2" evidence="3">
    <location>
        <begin position="140"/>
        <end position="249"/>
    </location>
</feature>
<feature type="domain" description="Cadherin 3" evidence="3">
    <location>
        <begin position="250"/>
        <end position="355"/>
    </location>
</feature>
<feature type="domain" description="Cadherin 4" evidence="3">
    <location>
        <begin position="362"/>
        <end position="466"/>
    </location>
</feature>
<feature type="domain" description="Cadherin 5" evidence="3">
    <location>
        <begin position="467"/>
        <end position="570"/>
    </location>
</feature>
<feature type="domain" description="Cadherin 6" evidence="3">
    <location>
        <begin position="571"/>
        <end position="673"/>
    </location>
</feature>
<feature type="domain" description="Cadherin 7" evidence="3">
    <location>
        <begin position="677"/>
        <end position="795"/>
    </location>
</feature>
<feature type="region of interest" description="Disordered" evidence="4">
    <location>
        <begin position="1057"/>
        <end position="1091"/>
    </location>
</feature>
<feature type="region of interest" description="Disordered" evidence="4">
    <location>
        <begin position="1097"/>
        <end position="1116"/>
    </location>
</feature>
<feature type="region of interest" description="Disordered" evidence="4">
    <location>
        <begin position="1325"/>
        <end position="1347"/>
    </location>
</feature>
<feature type="glycosylation site" description="N-linked (GlcNAc...) asparagine" evidence="2">
    <location>
        <position position="27"/>
    </location>
</feature>
<feature type="glycosylation site" description="N-linked (GlcNAc...) asparagine" evidence="2">
    <location>
        <position position="48"/>
    </location>
</feature>
<feature type="glycosylation site" description="N-linked (GlcNAc...) asparagine" evidence="2">
    <location>
        <position position="54"/>
    </location>
</feature>
<feature type="glycosylation site" description="N-linked (GlcNAc...) asparagine" evidence="2">
    <location>
        <position position="344"/>
    </location>
</feature>
<feature type="glycosylation site" description="N-linked (GlcNAc...) asparagine" evidence="2">
    <location>
        <position position="553"/>
    </location>
</feature>
<feature type="glycosylation site" description="N-linked (GlcNAc...) asparagine" evidence="2">
    <location>
        <position position="773"/>
    </location>
</feature>
<feature type="splice variant" id="VSP_017990" description="In isoform 2." evidence="5">
    <original>PMKEVVRSCTPMKE</original>
    <variation>TDSRTSTIEICSEI</variation>
    <location>
        <begin position="1012"/>
        <end position="1025"/>
    </location>
</feature>
<feature type="splice variant" id="VSP_017991" description="In isoform 2." evidence="5">
    <location>
        <begin position="1026"/>
        <end position="1347"/>
    </location>
</feature>
<accession>Q71M42</accession>
<accession>Q71M43</accession>
<reference key="1">
    <citation type="submission" date="2001-12" db="EMBL/GenBank/DDBJ databases">
        <title>Protocadherin X/Y, a neural cell surface adhesion molecule subject to differential and domain-specific selection in the course of hominid evolution.</title>
        <authorList>
            <person name="Williams N.A."/>
            <person name="Crow T.J."/>
        </authorList>
    </citation>
    <scope>NUCLEOTIDE SEQUENCE [GENOMIC DNA]</scope>
</reference>
<gene>
    <name type="primary">PCDH11X</name>
    <name type="synonym">PCDH11</name>
    <name type="synonym">PCDHX</name>
</gene>
<protein>
    <recommendedName>
        <fullName>Protocadherin-11 X-linked</fullName>
        <shortName>Protocadherin-11</shortName>
    </recommendedName>
    <alternativeName>
        <fullName>Protocadherin on the X chromosome</fullName>
        <shortName>PCDH-X</shortName>
    </alternativeName>
</protein>
<organism>
    <name type="scientific">Pan troglodytes</name>
    <name type="common">Chimpanzee</name>
    <dbReference type="NCBI Taxonomy" id="9598"/>
    <lineage>
        <taxon>Eukaryota</taxon>
        <taxon>Metazoa</taxon>
        <taxon>Chordata</taxon>
        <taxon>Craniata</taxon>
        <taxon>Vertebrata</taxon>
        <taxon>Euteleostomi</taxon>
        <taxon>Mammalia</taxon>
        <taxon>Eutheria</taxon>
        <taxon>Euarchontoglires</taxon>
        <taxon>Primates</taxon>
        <taxon>Haplorrhini</taxon>
        <taxon>Catarrhini</taxon>
        <taxon>Hominidae</taxon>
        <taxon>Pan</taxon>
    </lineage>
</organism>
<keyword id="KW-0025">Alternative splicing</keyword>
<keyword id="KW-0106">Calcium</keyword>
<keyword id="KW-0130">Cell adhesion</keyword>
<keyword id="KW-1003">Cell membrane</keyword>
<keyword id="KW-0325">Glycoprotein</keyword>
<keyword id="KW-0472">Membrane</keyword>
<keyword id="KW-1185">Reference proteome</keyword>
<keyword id="KW-0677">Repeat</keyword>
<keyword id="KW-0732">Signal</keyword>
<keyword id="KW-0812">Transmembrane</keyword>
<keyword id="KW-1133">Transmembrane helix</keyword>